<name>OKAF_PENOH</name>
<gene>
    <name evidence="5" type="primary">okaF</name>
</gene>
<feature type="chain" id="PRO_0000461561" description="O-methyltransferase okaF">
    <location>
        <begin position="1"/>
        <end position="382"/>
    </location>
</feature>
<feature type="active site" description="Proton acceptor" evidence="2">
    <location>
        <position position="291"/>
    </location>
</feature>
<feature type="binding site" evidence="1">
    <location>
        <position position="249"/>
    </location>
    <ligand>
        <name>S-adenosyl-L-methionine</name>
        <dbReference type="ChEBI" id="CHEBI:59789"/>
    </ligand>
</feature>
<feature type="binding site" evidence="1">
    <location>
        <position position="287"/>
    </location>
    <ligand>
        <name>S-adenosyl-L-methionine</name>
        <dbReference type="ChEBI" id="CHEBI:59789"/>
    </ligand>
</feature>
<proteinExistence type="evidence at protein level"/>
<comment type="function">
    <text evidence="3 4">O-methyltransferase; part of the gene cluster that mediates the biosynthesis of okaramine B, a prenylated indole alkaloid that possesses an unusual octacyclic ring system, including a four-membered azetidine ring and an eight-membered azocine ring, and that exhibits insecticidal activity against silkworm larvae (PubMed:28631282, PubMed:29384650). Within the pathway, okaF catalyzes the last step which is the methylation of 3-desmethyl okaramine B to produce okaramine B (PubMed:28631282). With okaG, OkaF is also able to produce okaramine D from okaramine E (PubMed:28631282). The biosynthesis begins with the NRPS okaA that condenses two tryptophan molecules into cyclo(L-Trp-L-Trp). Prenylation by the prenyltransferase okaC then leads to the formation of cyclo(N8-(alpha,alpha-dimethylallyl)-L-Trp-6a-(alpha,alpha-dime-thylallyl)-L-Trp). This is followed by indole 2,3-epoxidation by the FAD-dependent monooxygenase okaB to facilitate the formation of the hexahydropyrrolo[2,3-b]indole (HPI) moiety of okaramine C. The cytochrome P450 monooxygenase okaD then likely catalyzes formation of the eight-membered ring of okaramine A. The dioxygenase okaE further forms the unusual 2-dimethyl-3-methyl-azetidine ring to yield 12-deshydroxyl okaramine E, as well as the hydroxylation of 12-deshydroxyl okaramine E to produce okaramine E. The cytochrome P450 monoxygenase okaG converts 12-deshydroxyl okaramine E into 3-desmethyl okaramine B which is further methylated by the methyltransferase okaF into okaramine B. In a shunt pathway, okaG and okaF together are also able to convert okaramine E into okaramine D (PubMed:28631282, PubMed:29384650). Okaramine H is produced by nonenzymatic conversion from okaramine A (PubMed:29384650).</text>
</comment>
<comment type="catalytic activity">
    <reaction evidence="3">
        <text>3-desmethyl okaramine B + S-adenosyl-L-methionine = okaramine B + S-adenosyl-L-homocysteine + H(+)</text>
        <dbReference type="Rhea" id="RHEA:82715"/>
        <dbReference type="ChEBI" id="CHEBI:15378"/>
        <dbReference type="ChEBI" id="CHEBI:57856"/>
        <dbReference type="ChEBI" id="CHEBI:59789"/>
        <dbReference type="ChEBI" id="CHEBI:197976"/>
        <dbReference type="ChEBI" id="CHEBI:232467"/>
    </reaction>
    <physiologicalReaction direction="left-to-right" evidence="3">
        <dbReference type="Rhea" id="RHEA:82716"/>
    </physiologicalReaction>
</comment>
<comment type="pathway">
    <text evidence="3 6">Alkaloid biosynthesis.</text>
</comment>
<comment type="disruption phenotype">
    <text evidence="4">Abolishes the production of okaramine B and leads to the accumulation of 3-desmethyl okaramine B.</text>
</comment>
<comment type="similarity">
    <text evidence="2">Belongs to the class I-like SAM-binding methyltransferase superfamily. Cation-independent O-methyltransferase family.</text>
</comment>
<evidence type="ECO:0000250" key="1">
    <source>
        <dbReference type="UniProtKB" id="O04385"/>
    </source>
</evidence>
<evidence type="ECO:0000255" key="2">
    <source>
        <dbReference type="PROSITE-ProRule" id="PRU01020"/>
    </source>
</evidence>
<evidence type="ECO:0000269" key="3">
    <source>
    </source>
</evidence>
<evidence type="ECO:0000269" key="4">
    <source>
    </source>
</evidence>
<evidence type="ECO:0000303" key="5">
    <source>
    </source>
</evidence>
<evidence type="ECO:0000305" key="6">
    <source>
    </source>
</evidence>
<reference key="1">
    <citation type="journal article" date="2018" name="ACS Chem. Biol.">
        <title>Biosynthesis and Structure-Activity Relationship Studies of Okaramines That Target Insect Glutamate-Gated Chloride Channels.</title>
        <authorList>
            <person name="Kato N."/>
            <person name="Furutani S."/>
            <person name="Otaka J."/>
            <person name="Noguchi A."/>
            <person name="Kinugasa K."/>
            <person name="Kai K."/>
            <person name="Hayashi H."/>
            <person name="Ihara M."/>
            <person name="Takahashi S."/>
            <person name="Matsuda K."/>
            <person name="Osada H."/>
        </authorList>
    </citation>
    <scope>NUCLEOTIDE SEQUENCE [GENOMIC DNA]</scope>
    <scope>FUNCTION</scope>
    <scope>PATHWAY</scope>
    <source>
        <strain>ATCC 90288 / AK-40</strain>
    </source>
</reference>
<reference key="2">
    <citation type="journal article" date="2017" name="Angew. Chem. Int. Ed.">
        <title>Biosynthesis of Complex Indole Alkaloids: Elucidation of the Concise Pathway of Okaramines.</title>
        <authorList>
            <person name="Lai C.Y."/>
            <person name="Lo I.W."/>
            <person name="Hewage R.T."/>
            <person name="Chen Y.C."/>
            <person name="Chen C.T."/>
            <person name="Lee C.F."/>
            <person name="Lin S."/>
            <person name="Tang M.C."/>
            <person name="Lin H.C."/>
        </authorList>
    </citation>
    <scope>FUNCTION</scope>
    <scope>DISRUPTION PHENOTYPE</scope>
    <scope>CATALYTIC ACTIVITY</scope>
    <scope>PATHWAY</scope>
</reference>
<dbReference type="EC" id="2.1.1.-" evidence="3"/>
<dbReference type="EMBL" id="LC316945">
    <property type="protein sequence ID" value="BBB04332.1"/>
    <property type="molecule type" value="Genomic_DNA"/>
</dbReference>
<dbReference type="GO" id="GO:0008171">
    <property type="term" value="F:O-methyltransferase activity"/>
    <property type="evidence" value="ECO:0007669"/>
    <property type="project" value="InterPro"/>
</dbReference>
<dbReference type="GO" id="GO:0032259">
    <property type="term" value="P:methylation"/>
    <property type="evidence" value="ECO:0007669"/>
    <property type="project" value="UniProtKB-KW"/>
</dbReference>
<dbReference type="GO" id="GO:0044550">
    <property type="term" value="P:secondary metabolite biosynthetic process"/>
    <property type="evidence" value="ECO:0007669"/>
    <property type="project" value="UniProtKB-ARBA"/>
</dbReference>
<dbReference type="CDD" id="cd02440">
    <property type="entry name" value="AdoMet_MTases"/>
    <property type="match status" value="1"/>
</dbReference>
<dbReference type="Gene3D" id="3.40.50.150">
    <property type="entry name" value="Vaccinia Virus protein VP39"/>
    <property type="match status" value="1"/>
</dbReference>
<dbReference type="Gene3D" id="1.10.10.10">
    <property type="entry name" value="Winged helix-like DNA-binding domain superfamily/Winged helix DNA-binding domain"/>
    <property type="match status" value="1"/>
</dbReference>
<dbReference type="InterPro" id="IPR016461">
    <property type="entry name" value="COMT-like"/>
</dbReference>
<dbReference type="InterPro" id="IPR001077">
    <property type="entry name" value="O_MeTrfase_dom"/>
</dbReference>
<dbReference type="InterPro" id="IPR029063">
    <property type="entry name" value="SAM-dependent_MTases_sf"/>
</dbReference>
<dbReference type="InterPro" id="IPR036388">
    <property type="entry name" value="WH-like_DNA-bd_sf"/>
</dbReference>
<dbReference type="InterPro" id="IPR036390">
    <property type="entry name" value="WH_DNA-bd_sf"/>
</dbReference>
<dbReference type="PANTHER" id="PTHR43712:SF1">
    <property type="entry name" value="HYPOTHETICAL O-METHYLTRANSFERASE (EUROFUNG)-RELATED"/>
    <property type="match status" value="1"/>
</dbReference>
<dbReference type="PANTHER" id="PTHR43712">
    <property type="entry name" value="PUTATIVE (AFU_ORTHOLOGUE AFUA_4G14580)-RELATED"/>
    <property type="match status" value="1"/>
</dbReference>
<dbReference type="Pfam" id="PF00891">
    <property type="entry name" value="Methyltransf_2"/>
    <property type="match status" value="1"/>
</dbReference>
<dbReference type="PIRSF" id="PIRSF005739">
    <property type="entry name" value="O-mtase"/>
    <property type="match status" value="1"/>
</dbReference>
<dbReference type="SUPFAM" id="SSF53335">
    <property type="entry name" value="S-adenosyl-L-methionine-dependent methyltransferases"/>
    <property type="match status" value="1"/>
</dbReference>
<dbReference type="SUPFAM" id="SSF46785">
    <property type="entry name" value="Winged helix' DNA-binding domain"/>
    <property type="match status" value="1"/>
</dbReference>
<dbReference type="PROSITE" id="PS51683">
    <property type="entry name" value="SAM_OMT_II"/>
    <property type="match status" value="1"/>
</dbReference>
<accession>A0A2Z5UFJ1</accession>
<protein>
    <recommendedName>
        <fullName evidence="5">O-methyltransferase okaF</fullName>
        <ecNumber evidence="3">2.1.1.-</ecNumber>
    </recommendedName>
    <alternativeName>
        <fullName evidence="5">Okaramines biosynthesis cluster protein F</fullName>
    </alternativeName>
</protein>
<keyword id="KW-0489">Methyltransferase</keyword>
<keyword id="KW-0949">S-adenosyl-L-methionine</keyword>
<keyword id="KW-0808">Transferase</keyword>
<sequence length="382" mass="42195">MEAIAQEIQKLHANTDEAGRGKINHDLSVLLASFDTDWEKILKLAAGPLRLALVKVGVDQGIFHALNERSHTLPELIEKTGVAPYLLERILRGQASFGMIKEEGAKGFAANRFTTLLAGPNTSGAVTYIFDILRPIASAIPGFLSERNNPAITSTHDTVFQRAFNTELGGFEWMTGHPEHYGNLFQFLALRPNCEWVDAFPIEAEIGSFTNDPHVEKVLLVDVGGGTGAQSVAFRKKLPHVKGRVIVQEIAETLIHVGAKAPAGIEFMEYDCFTPQPIRGAKFYYLRYVMHLWQDERCVEALKVIITAMGPESRLIIDEAVIPDRDVPWQAACQSILMTAALAGAERTLTEWHNLLDAAGLKILNIFPYDLNMQSVIIAVPK</sequence>
<organism>
    <name type="scientific">Penicillium ochrochloron</name>
    <dbReference type="NCBI Taxonomy" id="69780"/>
    <lineage>
        <taxon>Eukaryota</taxon>
        <taxon>Fungi</taxon>
        <taxon>Dikarya</taxon>
        <taxon>Ascomycota</taxon>
        <taxon>Pezizomycotina</taxon>
        <taxon>Eurotiomycetes</taxon>
        <taxon>Eurotiomycetidae</taxon>
        <taxon>Eurotiales</taxon>
        <taxon>Aspergillaceae</taxon>
        <taxon>Penicillium</taxon>
    </lineage>
</organism>